<proteinExistence type="inferred from homology"/>
<accession>Q630V2</accession>
<evidence type="ECO:0000255" key="1">
    <source>
        <dbReference type="HAMAP-Rule" id="MF_01350"/>
    </source>
</evidence>
<protein>
    <recommendedName>
        <fullName evidence="1">NADH-quinone oxidoreductase subunit H</fullName>
        <ecNumber evidence="1">7.1.1.-</ecNumber>
    </recommendedName>
    <alternativeName>
        <fullName evidence="1">NADH dehydrogenase I subunit H</fullName>
    </alternativeName>
    <alternativeName>
        <fullName evidence="1">NDH-1 subunit H</fullName>
    </alternativeName>
</protein>
<gene>
    <name evidence="1" type="primary">nuoH</name>
    <name type="ordered locus">BCE33L4996</name>
</gene>
<sequence>MIETLLQSPSSWTNFFIFFGLAVLLLFAVLGFVTYGILAERKVMGFMQGRIGPNQVGGRFGLLQTVADVLKLLLKEDSIPKAADKPLFILAPVIAFAPAFMVLAVIPFTDKFQFADIGVGLLYYIAVSGITTIGVVTGGWASNNKYSLLGGMRAAAQMISYEIPLVMSVIGIVLLAGSLNLNEIVAAQENVWYIFVQPIGFVVFLIAAVAELNRTPFDLPEAESELVSGYHTEYSGFRWAFFMLSEYVYFFGMASLITVLFLGGWNPVMFLGFIPGAVWFALKFSSVVFLLIWFRVTFPRIRGDQLMEFGWKVLLPIALANIFLTALIKELFF</sequence>
<dbReference type="EC" id="7.1.1.-" evidence="1"/>
<dbReference type="EMBL" id="CP000001">
    <property type="protein sequence ID" value="AAU15284.1"/>
    <property type="molecule type" value="Genomic_DNA"/>
</dbReference>
<dbReference type="RefSeq" id="WP_000573430.1">
    <property type="nucleotide sequence ID" value="NZ_CP009968.1"/>
</dbReference>
<dbReference type="SMR" id="Q630V2"/>
<dbReference type="GeneID" id="93005827"/>
<dbReference type="KEGG" id="bcz:BCE33L4996"/>
<dbReference type="PATRIC" id="fig|288681.22.peg.350"/>
<dbReference type="Proteomes" id="UP000002612">
    <property type="component" value="Chromosome"/>
</dbReference>
<dbReference type="GO" id="GO:0005886">
    <property type="term" value="C:plasma membrane"/>
    <property type="evidence" value="ECO:0007669"/>
    <property type="project" value="UniProtKB-SubCell"/>
</dbReference>
<dbReference type="GO" id="GO:0003954">
    <property type="term" value="F:NADH dehydrogenase activity"/>
    <property type="evidence" value="ECO:0007669"/>
    <property type="project" value="TreeGrafter"/>
</dbReference>
<dbReference type="GO" id="GO:0016655">
    <property type="term" value="F:oxidoreductase activity, acting on NAD(P)H, quinone or similar compound as acceptor"/>
    <property type="evidence" value="ECO:0007669"/>
    <property type="project" value="UniProtKB-UniRule"/>
</dbReference>
<dbReference type="GO" id="GO:0048038">
    <property type="term" value="F:quinone binding"/>
    <property type="evidence" value="ECO:0007669"/>
    <property type="project" value="UniProtKB-KW"/>
</dbReference>
<dbReference type="GO" id="GO:0009060">
    <property type="term" value="P:aerobic respiration"/>
    <property type="evidence" value="ECO:0007669"/>
    <property type="project" value="TreeGrafter"/>
</dbReference>
<dbReference type="HAMAP" id="MF_01350">
    <property type="entry name" value="NDH1_NuoH"/>
    <property type="match status" value="1"/>
</dbReference>
<dbReference type="InterPro" id="IPR001694">
    <property type="entry name" value="NADH_UbQ_OxRdtase_su1/FPO"/>
</dbReference>
<dbReference type="InterPro" id="IPR018086">
    <property type="entry name" value="NADH_UbQ_OxRdtase_su1_CS"/>
</dbReference>
<dbReference type="NCBIfam" id="NF004741">
    <property type="entry name" value="PRK06076.1-2"/>
    <property type="match status" value="1"/>
</dbReference>
<dbReference type="PANTHER" id="PTHR11432">
    <property type="entry name" value="NADH DEHYDROGENASE SUBUNIT 1"/>
    <property type="match status" value="1"/>
</dbReference>
<dbReference type="PANTHER" id="PTHR11432:SF3">
    <property type="entry name" value="NADH-UBIQUINONE OXIDOREDUCTASE CHAIN 1"/>
    <property type="match status" value="1"/>
</dbReference>
<dbReference type="Pfam" id="PF00146">
    <property type="entry name" value="NADHdh"/>
    <property type="match status" value="1"/>
</dbReference>
<dbReference type="PROSITE" id="PS00668">
    <property type="entry name" value="COMPLEX1_ND1_2"/>
    <property type="match status" value="1"/>
</dbReference>
<organism>
    <name type="scientific">Bacillus cereus (strain ZK / E33L)</name>
    <dbReference type="NCBI Taxonomy" id="288681"/>
    <lineage>
        <taxon>Bacteria</taxon>
        <taxon>Bacillati</taxon>
        <taxon>Bacillota</taxon>
        <taxon>Bacilli</taxon>
        <taxon>Bacillales</taxon>
        <taxon>Bacillaceae</taxon>
        <taxon>Bacillus</taxon>
        <taxon>Bacillus cereus group</taxon>
    </lineage>
</organism>
<keyword id="KW-1003">Cell membrane</keyword>
<keyword id="KW-0472">Membrane</keyword>
<keyword id="KW-0520">NAD</keyword>
<keyword id="KW-0874">Quinone</keyword>
<keyword id="KW-1278">Translocase</keyword>
<keyword id="KW-0812">Transmembrane</keyword>
<keyword id="KW-1133">Transmembrane helix</keyword>
<keyword id="KW-0830">Ubiquinone</keyword>
<feature type="chain" id="PRO_0000240057" description="NADH-quinone oxidoreductase subunit H">
    <location>
        <begin position="1"/>
        <end position="333"/>
    </location>
</feature>
<feature type="transmembrane region" description="Helical" evidence="1">
    <location>
        <begin position="15"/>
        <end position="35"/>
    </location>
</feature>
<feature type="transmembrane region" description="Helical" evidence="1">
    <location>
        <begin position="88"/>
        <end position="108"/>
    </location>
</feature>
<feature type="transmembrane region" description="Helical" evidence="1">
    <location>
        <begin position="117"/>
        <end position="137"/>
    </location>
</feature>
<feature type="transmembrane region" description="Helical" evidence="1">
    <location>
        <begin position="159"/>
        <end position="179"/>
    </location>
</feature>
<feature type="transmembrane region" description="Helical" evidence="1">
    <location>
        <begin position="191"/>
        <end position="211"/>
    </location>
</feature>
<feature type="transmembrane region" description="Helical" evidence="1">
    <location>
        <begin position="239"/>
        <end position="259"/>
    </location>
</feature>
<feature type="transmembrane region" description="Helical" evidence="1">
    <location>
        <begin position="274"/>
        <end position="296"/>
    </location>
</feature>
<feature type="transmembrane region" description="Helical" evidence="1">
    <location>
        <begin position="313"/>
        <end position="333"/>
    </location>
</feature>
<comment type="function">
    <text evidence="1">NDH-1 shuttles electrons from NADH, via FMN and iron-sulfur (Fe-S) centers, to quinones in the respiratory chain. The immediate electron acceptor for the enzyme in this species is believed to be ubiquinone. Couples the redox reaction to proton translocation (for every two electrons transferred, four hydrogen ions are translocated across the cytoplasmic membrane), and thus conserves the redox energy in a proton gradient. This subunit may bind ubiquinone.</text>
</comment>
<comment type="catalytic activity">
    <reaction evidence="1">
        <text>a quinone + NADH + 5 H(+)(in) = a quinol + NAD(+) + 4 H(+)(out)</text>
        <dbReference type="Rhea" id="RHEA:57888"/>
        <dbReference type="ChEBI" id="CHEBI:15378"/>
        <dbReference type="ChEBI" id="CHEBI:24646"/>
        <dbReference type="ChEBI" id="CHEBI:57540"/>
        <dbReference type="ChEBI" id="CHEBI:57945"/>
        <dbReference type="ChEBI" id="CHEBI:132124"/>
    </reaction>
</comment>
<comment type="subunit">
    <text evidence="1">NDH-1 is composed of 14 different subunits. Subunits NuoA, H, J, K, L, M, N constitute the membrane sector of the complex.</text>
</comment>
<comment type="subcellular location">
    <subcellularLocation>
        <location evidence="1">Cell membrane</location>
        <topology evidence="1">Multi-pass membrane protein</topology>
    </subcellularLocation>
</comment>
<comment type="similarity">
    <text evidence="1">Belongs to the complex I subunit 1 family.</text>
</comment>
<reference key="1">
    <citation type="journal article" date="2006" name="J. Bacteriol.">
        <title>Pathogenomic sequence analysis of Bacillus cereus and Bacillus thuringiensis isolates closely related to Bacillus anthracis.</title>
        <authorList>
            <person name="Han C.S."/>
            <person name="Xie G."/>
            <person name="Challacombe J.F."/>
            <person name="Altherr M.R."/>
            <person name="Bhotika S.S."/>
            <person name="Bruce D."/>
            <person name="Campbell C.S."/>
            <person name="Campbell M.L."/>
            <person name="Chen J."/>
            <person name="Chertkov O."/>
            <person name="Cleland C."/>
            <person name="Dimitrijevic M."/>
            <person name="Doggett N.A."/>
            <person name="Fawcett J.J."/>
            <person name="Glavina T."/>
            <person name="Goodwin L.A."/>
            <person name="Hill K.K."/>
            <person name="Hitchcock P."/>
            <person name="Jackson P.J."/>
            <person name="Keim P."/>
            <person name="Kewalramani A.R."/>
            <person name="Longmire J."/>
            <person name="Lucas S."/>
            <person name="Malfatti S."/>
            <person name="McMurry K."/>
            <person name="Meincke L.J."/>
            <person name="Misra M."/>
            <person name="Moseman B.L."/>
            <person name="Mundt M."/>
            <person name="Munk A.C."/>
            <person name="Okinaka R.T."/>
            <person name="Parson-Quintana B."/>
            <person name="Reilly L.P."/>
            <person name="Richardson P."/>
            <person name="Robinson D.L."/>
            <person name="Rubin E."/>
            <person name="Saunders E."/>
            <person name="Tapia R."/>
            <person name="Tesmer J.G."/>
            <person name="Thayer N."/>
            <person name="Thompson L.S."/>
            <person name="Tice H."/>
            <person name="Ticknor L.O."/>
            <person name="Wills P.L."/>
            <person name="Brettin T.S."/>
            <person name="Gilna P."/>
        </authorList>
    </citation>
    <scope>NUCLEOTIDE SEQUENCE [LARGE SCALE GENOMIC DNA]</scope>
    <source>
        <strain>ZK / E33L</strain>
    </source>
</reference>
<name>NUOH_BACCZ</name>